<reference key="1">
    <citation type="submission" date="2008-01" db="EMBL/GenBank/DDBJ databases">
        <title>Complete sequence of Shewanella halifaxensis HAW-EB4.</title>
        <authorList>
            <consortium name="US DOE Joint Genome Institute"/>
            <person name="Copeland A."/>
            <person name="Lucas S."/>
            <person name="Lapidus A."/>
            <person name="Glavina del Rio T."/>
            <person name="Dalin E."/>
            <person name="Tice H."/>
            <person name="Bruce D."/>
            <person name="Goodwin L."/>
            <person name="Pitluck S."/>
            <person name="Sims D."/>
            <person name="Brettin T."/>
            <person name="Detter J.C."/>
            <person name="Han C."/>
            <person name="Kuske C.R."/>
            <person name="Schmutz J."/>
            <person name="Larimer F."/>
            <person name="Land M."/>
            <person name="Hauser L."/>
            <person name="Kyrpides N."/>
            <person name="Kim E."/>
            <person name="Zhao J.-S."/>
            <person name="Richardson P."/>
        </authorList>
    </citation>
    <scope>NUCLEOTIDE SEQUENCE [LARGE SCALE GENOMIC DNA]</scope>
    <source>
        <strain>HAW-EB4</strain>
    </source>
</reference>
<comment type="function">
    <text evidence="1">The RuvA-RuvB-RuvC complex processes Holliday junction (HJ) DNA during genetic recombination and DNA repair, while the RuvA-RuvB complex plays an important role in the rescue of blocked DNA replication forks via replication fork reversal (RFR). RuvA specifically binds to HJ cruciform DNA, conferring on it an open structure. The RuvB hexamer acts as an ATP-dependent pump, pulling dsDNA into and through the RuvAB complex. HJ branch migration allows RuvC to scan DNA until it finds its consensus sequence, where it cleaves and resolves the cruciform DNA.</text>
</comment>
<comment type="subunit">
    <text evidence="1">Homotetramer. Forms an RuvA(8)-RuvB(12)-Holliday junction (HJ) complex. HJ DNA is sandwiched between 2 RuvA tetramers; dsDNA enters through RuvA and exits via RuvB. An RuvB hexamer assembles on each DNA strand where it exits the tetramer. Each RuvB hexamer is contacted by two RuvA subunits (via domain III) on 2 adjacent RuvB subunits; this complex drives branch migration. In the full resolvosome a probable DNA-RuvA(4)-RuvB(12)-RuvC(2) complex forms which resolves the HJ.</text>
</comment>
<comment type="subcellular location">
    <subcellularLocation>
        <location evidence="1">Cytoplasm</location>
    </subcellularLocation>
</comment>
<comment type="domain">
    <text evidence="1">Has three domains with a flexible linker between the domains II and III and assumes an 'L' shape. Domain III is highly mobile and contacts RuvB.</text>
</comment>
<comment type="similarity">
    <text evidence="1">Belongs to the RuvA family.</text>
</comment>
<accession>B0TSA6</accession>
<gene>
    <name evidence="1" type="primary">ruvA</name>
    <name type="ordered locus">Shal_1921</name>
</gene>
<dbReference type="EMBL" id="CP000931">
    <property type="protein sequence ID" value="ABZ76486.1"/>
    <property type="molecule type" value="Genomic_DNA"/>
</dbReference>
<dbReference type="RefSeq" id="WP_012277018.1">
    <property type="nucleotide sequence ID" value="NC_010334.1"/>
</dbReference>
<dbReference type="SMR" id="B0TSA6"/>
<dbReference type="STRING" id="458817.Shal_1921"/>
<dbReference type="KEGG" id="shl:Shal_1921"/>
<dbReference type="eggNOG" id="COG0632">
    <property type="taxonomic scope" value="Bacteria"/>
</dbReference>
<dbReference type="HOGENOM" id="CLU_087936_0_0_6"/>
<dbReference type="OrthoDB" id="5293449at2"/>
<dbReference type="Proteomes" id="UP000001317">
    <property type="component" value="Chromosome"/>
</dbReference>
<dbReference type="GO" id="GO:0005737">
    <property type="term" value="C:cytoplasm"/>
    <property type="evidence" value="ECO:0007669"/>
    <property type="project" value="UniProtKB-SubCell"/>
</dbReference>
<dbReference type="GO" id="GO:0009379">
    <property type="term" value="C:Holliday junction helicase complex"/>
    <property type="evidence" value="ECO:0007669"/>
    <property type="project" value="InterPro"/>
</dbReference>
<dbReference type="GO" id="GO:0048476">
    <property type="term" value="C:Holliday junction resolvase complex"/>
    <property type="evidence" value="ECO:0007669"/>
    <property type="project" value="UniProtKB-UniRule"/>
</dbReference>
<dbReference type="GO" id="GO:0005524">
    <property type="term" value="F:ATP binding"/>
    <property type="evidence" value="ECO:0007669"/>
    <property type="project" value="InterPro"/>
</dbReference>
<dbReference type="GO" id="GO:0000400">
    <property type="term" value="F:four-way junction DNA binding"/>
    <property type="evidence" value="ECO:0007669"/>
    <property type="project" value="UniProtKB-UniRule"/>
</dbReference>
<dbReference type="GO" id="GO:0009378">
    <property type="term" value="F:four-way junction helicase activity"/>
    <property type="evidence" value="ECO:0007669"/>
    <property type="project" value="InterPro"/>
</dbReference>
<dbReference type="GO" id="GO:0006310">
    <property type="term" value="P:DNA recombination"/>
    <property type="evidence" value="ECO:0007669"/>
    <property type="project" value="UniProtKB-UniRule"/>
</dbReference>
<dbReference type="GO" id="GO:0006281">
    <property type="term" value="P:DNA repair"/>
    <property type="evidence" value="ECO:0007669"/>
    <property type="project" value="UniProtKB-UniRule"/>
</dbReference>
<dbReference type="CDD" id="cd14332">
    <property type="entry name" value="UBA_RuvA_C"/>
    <property type="match status" value="1"/>
</dbReference>
<dbReference type="FunFam" id="2.40.50.140:FF:000083">
    <property type="entry name" value="Holliday junction ATP-dependent DNA helicase RuvA"/>
    <property type="match status" value="1"/>
</dbReference>
<dbReference type="Gene3D" id="1.10.150.20">
    <property type="entry name" value="5' to 3' exonuclease, C-terminal subdomain"/>
    <property type="match status" value="1"/>
</dbReference>
<dbReference type="Gene3D" id="1.10.8.10">
    <property type="entry name" value="DNA helicase RuvA subunit, C-terminal domain"/>
    <property type="match status" value="1"/>
</dbReference>
<dbReference type="Gene3D" id="2.40.50.140">
    <property type="entry name" value="Nucleic acid-binding proteins"/>
    <property type="match status" value="1"/>
</dbReference>
<dbReference type="HAMAP" id="MF_00031">
    <property type="entry name" value="DNA_HJ_migration_RuvA"/>
    <property type="match status" value="1"/>
</dbReference>
<dbReference type="InterPro" id="IPR013849">
    <property type="entry name" value="DNA_helicase_Holl-junc_RuvA_I"/>
</dbReference>
<dbReference type="InterPro" id="IPR003583">
    <property type="entry name" value="Hlx-hairpin-Hlx_DNA-bd_motif"/>
</dbReference>
<dbReference type="InterPro" id="IPR012340">
    <property type="entry name" value="NA-bd_OB-fold"/>
</dbReference>
<dbReference type="InterPro" id="IPR000085">
    <property type="entry name" value="RuvA"/>
</dbReference>
<dbReference type="InterPro" id="IPR010994">
    <property type="entry name" value="RuvA_2-like"/>
</dbReference>
<dbReference type="InterPro" id="IPR011114">
    <property type="entry name" value="RuvA_C"/>
</dbReference>
<dbReference type="InterPro" id="IPR036267">
    <property type="entry name" value="RuvA_C_sf"/>
</dbReference>
<dbReference type="NCBIfam" id="TIGR00084">
    <property type="entry name" value="ruvA"/>
    <property type="match status" value="1"/>
</dbReference>
<dbReference type="Pfam" id="PF14520">
    <property type="entry name" value="HHH_5"/>
    <property type="match status" value="1"/>
</dbReference>
<dbReference type="Pfam" id="PF07499">
    <property type="entry name" value="RuvA_C"/>
    <property type="match status" value="1"/>
</dbReference>
<dbReference type="Pfam" id="PF01330">
    <property type="entry name" value="RuvA_N"/>
    <property type="match status" value="1"/>
</dbReference>
<dbReference type="SMART" id="SM00278">
    <property type="entry name" value="HhH1"/>
    <property type="match status" value="2"/>
</dbReference>
<dbReference type="SUPFAM" id="SSF46929">
    <property type="entry name" value="DNA helicase RuvA subunit, C-terminal domain"/>
    <property type="match status" value="1"/>
</dbReference>
<dbReference type="SUPFAM" id="SSF50249">
    <property type="entry name" value="Nucleic acid-binding proteins"/>
    <property type="match status" value="1"/>
</dbReference>
<dbReference type="SUPFAM" id="SSF47781">
    <property type="entry name" value="RuvA domain 2-like"/>
    <property type="match status" value="1"/>
</dbReference>
<evidence type="ECO:0000255" key="1">
    <source>
        <dbReference type="HAMAP-Rule" id="MF_00031"/>
    </source>
</evidence>
<proteinExistence type="inferred from homology"/>
<sequence>MIGRIRGLLIEKQAPEVLVDVSGVGYEIQMPLTSFYELPELGQEAVIYTHFVVREDAQLLYGFISKQERSLFRLLIKANGVGPKLGLTILSGMTAREFVACVERDDIATLVKLPGVGKKTAERLLVEMRDKLKSLMEASVGSEREFMLQSNYTAPEAVNTAEEDAIAALLSLGYKPAQASKAVSSVYTDGMSSETLIKSALKSML</sequence>
<name>RUVA_SHEHH</name>
<feature type="chain" id="PRO_1000074438" description="Holliday junction branch migration complex subunit RuvA">
    <location>
        <begin position="1"/>
        <end position="205"/>
    </location>
</feature>
<feature type="region of interest" description="Domain I" evidence="1">
    <location>
        <begin position="1"/>
        <end position="64"/>
    </location>
</feature>
<feature type="region of interest" description="Domain II" evidence="1">
    <location>
        <begin position="65"/>
        <end position="143"/>
    </location>
</feature>
<feature type="region of interest" description="Flexible linker" evidence="1">
    <location>
        <begin position="144"/>
        <end position="156"/>
    </location>
</feature>
<feature type="region of interest" description="Domain III" evidence="1">
    <location>
        <begin position="157"/>
        <end position="205"/>
    </location>
</feature>
<protein>
    <recommendedName>
        <fullName evidence="1">Holliday junction branch migration complex subunit RuvA</fullName>
    </recommendedName>
</protein>
<organism>
    <name type="scientific">Shewanella halifaxensis (strain HAW-EB4)</name>
    <dbReference type="NCBI Taxonomy" id="458817"/>
    <lineage>
        <taxon>Bacteria</taxon>
        <taxon>Pseudomonadati</taxon>
        <taxon>Pseudomonadota</taxon>
        <taxon>Gammaproteobacteria</taxon>
        <taxon>Alteromonadales</taxon>
        <taxon>Shewanellaceae</taxon>
        <taxon>Shewanella</taxon>
    </lineage>
</organism>
<keyword id="KW-0963">Cytoplasm</keyword>
<keyword id="KW-0227">DNA damage</keyword>
<keyword id="KW-0233">DNA recombination</keyword>
<keyword id="KW-0234">DNA repair</keyword>
<keyword id="KW-0238">DNA-binding</keyword>